<protein>
    <recommendedName>
        <fullName evidence="1">Iron-sulfur cluster repair protein YtfE</fullName>
    </recommendedName>
</protein>
<sequence length="220" mass="24883">MAYRDQPLGELALSIPRASALFRKYDMDYCCGGKQTLARAAARKELDVEVIEAELAKLAEQPIEKDWRSAPLAEIIDHIIVRYHDRHREQLPELILQATKVERVHADKPSVPKGLTKYLTMLHEELSSHMMKEEQILFPMIKQGMGSQAMGPISVMESEHDEAGELLEVIKHTTNNVTPPPEACTTWKAMYNGINELIDDLMDHISLENNVLFPRALAGE</sequence>
<keyword id="KW-0963">Cytoplasm</keyword>
<keyword id="KW-0408">Iron</keyword>
<keyword id="KW-0479">Metal-binding</keyword>
<keyword id="KW-0346">Stress response</keyword>
<feature type="chain" id="PRO_1000069417" description="Iron-sulfur cluster repair protein YtfE">
    <location>
        <begin position="1"/>
        <end position="220"/>
    </location>
</feature>
<comment type="function">
    <text evidence="1">Di-iron-containing protein involved in the repair of iron-sulfur clusters damaged by oxidative and nitrosative stress conditions.</text>
</comment>
<comment type="subunit">
    <text evidence="1">Homodimer.</text>
</comment>
<comment type="subcellular location">
    <subcellularLocation>
        <location evidence="1">Cytoplasm</location>
    </subcellularLocation>
</comment>
<comment type="similarity">
    <text evidence="1">Belongs to the RIC family. YtfE subfamily.</text>
</comment>
<accession>A8A7W5</accession>
<reference key="1">
    <citation type="journal article" date="2008" name="J. Bacteriol.">
        <title>The pangenome structure of Escherichia coli: comparative genomic analysis of E. coli commensal and pathogenic isolates.</title>
        <authorList>
            <person name="Rasko D.A."/>
            <person name="Rosovitz M.J."/>
            <person name="Myers G.S.A."/>
            <person name="Mongodin E.F."/>
            <person name="Fricke W.F."/>
            <person name="Gajer P."/>
            <person name="Crabtree J."/>
            <person name="Sebaihia M."/>
            <person name="Thomson N.R."/>
            <person name="Chaudhuri R."/>
            <person name="Henderson I.R."/>
            <person name="Sperandio V."/>
            <person name="Ravel J."/>
        </authorList>
    </citation>
    <scope>NUCLEOTIDE SEQUENCE [LARGE SCALE GENOMIC DNA]</scope>
    <source>
        <strain>HS</strain>
    </source>
</reference>
<organism>
    <name type="scientific">Escherichia coli O9:H4 (strain HS)</name>
    <dbReference type="NCBI Taxonomy" id="331112"/>
    <lineage>
        <taxon>Bacteria</taxon>
        <taxon>Pseudomonadati</taxon>
        <taxon>Pseudomonadota</taxon>
        <taxon>Gammaproteobacteria</taxon>
        <taxon>Enterobacterales</taxon>
        <taxon>Enterobacteriaceae</taxon>
        <taxon>Escherichia</taxon>
    </lineage>
</organism>
<proteinExistence type="inferred from homology"/>
<gene>
    <name evidence="1" type="primary">ytfE</name>
    <name type="ordered locus">EcHS_A4463</name>
</gene>
<name>YTFE_ECOHS</name>
<dbReference type="EMBL" id="CP000802">
    <property type="protein sequence ID" value="ABV08619.1"/>
    <property type="molecule type" value="Genomic_DNA"/>
</dbReference>
<dbReference type="RefSeq" id="WP_000331456.1">
    <property type="nucleotide sequence ID" value="NC_009800.1"/>
</dbReference>
<dbReference type="SMR" id="A8A7W5"/>
<dbReference type="GeneID" id="93777612"/>
<dbReference type="KEGG" id="ecx:EcHS_A4463"/>
<dbReference type="HOGENOM" id="CLU_076075_2_0_6"/>
<dbReference type="GO" id="GO:0005737">
    <property type="term" value="C:cytoplasm"/>
    <property type="evidence" value="ECO:0007669"/>
    <property type="project" value="UniProtKB-SubCell"/>
</dbReference>
<dbReference type="GO" id="GO:0046872">
    <property type="term" value="F:metal ion binding"/>
    <property type="evidence" value="ECO:0007669"/>
    <property type="project" value="UniProtKB-KW"/>
</dbReference>
<dbReference type="GO" id="GO:0030091">
    <property type="term" value="P:protein repair"/>
    <property type="evidence" value="ECO:0007669"/>
    <property type="project" value="UniProtKB-UniRule"/>
</dbReference>
<dbReference type="GO" id="GO:0051409">
    <property type="term" value="P:response to nitrosative stress"/>
    <property type="evidence" value="ECO:0007669"/>
    <property type="project" value="UniProtKB-UniRule"/>
</dbReference>
<dbReference type="GO" id="GO:0006979">
    <property type="term" value="P:response to oxidative stress"/>
    <property type="evidence" value="ECO:0007669"/>
    <property type="project" value="UniProtKB-UniRule"/>
</dbReference>
<dbReference type="CDD" id="cd12108">
    <property type="entry name" value="Hr-like"/>
    <property type="match status" value="1"/>
</dbReference>
<dbReference type="FunFam" id="1.20.120.520:FF:000001">
    <property type="entry name" value="Iron-sulfur cluster repair protein YtfE"/>
    <property type="match status" value="1"/>
</dbReference>
<dbReference type="Gene3D" id="1.20.120.520">
    <property type="entry name" value="nmb1532 protein domain like"/>
    <property type="match status" value="1"/>
</dbReference>
<dbReference type="HAMAP" id="MF_01606">
    <property type="entry name" value="RIC_YtfE"/>
    <property type="match status" value="1"/>
</dbReference>
<dbReference type="InterPro" id="IPR023742">
    <property type="entry name" value="FeS-repair_YftE"/>
</dbReference>
<dbReference type="InterPro" id="IPR012312">
    <property type="entry name" value="Hemerythrin-like"/>
</dbReference>
<dbReference type="InterPro" id="IPR019903">
    <property type="entry name" value="RIC_family"/>
</dbReference>
<dbReference type="NCBIfam" id="TIGR03652">
    <property type="entry name" value="FeS_repair_RIC"/>
    <property type="match status" value="1"/>
</dbReference>
<dbReference type="NCBIfam" id="NF008221">
    <property type="entry name" value="PRK10992.1"/>
    <property type="match status" value="1"/>
</dbReference>
<dbReference type="PANTHER" id="PTHR36438">
    <property type="entry name" value="IRON-SULFUR CLUSTER REPAIR PROTEIN YTFE"/>
    <property type="match status" value="1"/>
</dbReference>
<dbReference type="PANTHER" id="PTHR36438:SF1">
    <property type="entry name" value="IRON-SULFUR CLUSTER REPAIR PROTEIN YTFE"/>
    <property type="match status" value="1"/>
</dbReference>
<dbReference type="Pfam" id="PF01814">
    <property type="entry name" value="Hemerythrin"/>
    <property type="match status" value="1"/>
</dbReference>
<dbReference type="Pfam" id="PF04405">
    <property type="entry name" value="ScdA_N"/>
    <property type="match status" value="1"/>
</dbReference>
<evidence type="ECO:0000255" key="1">
    <source>
        <dbReference type="HAMAP-Rule" id="MF_01606"/>
    </source>
</evidence>